<name>PURA_RHILW</name>
<keyword id="KW-0963">Cytoplasm</keyword>
<keyword id="KW-0342">GTP-binding</keyword>
<keyword id="KW-0436">Ligase</keyword>
<keyword id="KW-0460">Magnesium</keyword>
<keyword id="KW-0479">Metal-binding</keyword>
<keyword id="KW-0547">Nucleotide-binding</keyword>
<keyword id="KW-0658">Purine biosynthesis</keyword>
<keyword id="KW-1185">Reference proteome</keyword>
<gene>
    <name evidence="1" type="primary">purA</name>
    <name type="ordered locus">Rleg2_3089</name>
</gene>
<protein>
    <recommendedName>
        <fullName evidence="1">Adenylosuccinate synthetase</fullName>
        <shortName evidence="1">AMPSase</shortName>
        <shortName evidence="1">AdSS</shortName>
        <ecNumber evidence="1">6.3.4.4</ecNumber>
    </recommendedName>
    <alternativeName>
        <fullName evidence="1">IMP--aspartate ligase</fullName>
    </alternativeName>
</protein>
<sequence length="432" mass="46466">MTNVVVVGSQWGDEGKGKIVDWLSERADIVVRYQGGHNAGHTLVIDGTSYKLSLLPSGVVRPGKMAVIGNGVVVDPHALIAEIGRLEAQGVTVTPDNLRIADNATLILSLHRELDAMREDAASNSGTKIGTTRRGIGPAYEDKVGRRAIRVMDLADLDSLAGKVDRILTHHNALRRGLGVAEVSHQTIMDELTSIADRVLPFRDTVWLFLDKERRKGSRILFEGAQGSLLDIDHGTYPFVTSSNTVAGQAAAGSGMGPGSLGYILGITKAYTTRVGEGPFPTELKDAIGEFLGEKGHEFGVVTGRKRRCGWFDAALVRQSIATNGITGIALTKLDVLDGLEELKICVGYMLDGEQIDHLPASQGAQARVEPVYITLEGWKESTVGARSWADLPAQAIKYVRQVEELIGAPVALLSTSPERDDTILVTDPFED</sequence>
<evidence type="ECO:0000255" key="1">
    <source>
        <dbReference type="HAMAP-Rule" id="MF_00011"/>
    </source>
</evidence>
<accession>B5ZMS8</accession>
<dbReference type="EC" id="6.3.4.4" evidence="1"/>
<dbReference type="EMBL" id="CP001191">
    <property type="protein sequence ID" value="ACI56356.1"/>
    <property type="molecule type" value="Genomic_DNA"/>
</dbReference>
<dbReference type="RefSeq" id="WP_003590514.1">
    <property type="nucleotide sequence ID" value="NC_011369.1"/>
</dbReference>
<dbReference type="SMR" id="B5ZMS8"/>
<dbReference type="STRING" id="395492.Rleg2_3089"/>
<dbReference type="KEGG" id="rlt:Rleg2_3089"/>
<dbReference type="eggNOG" id="COG0104">
    <property type="taxonomic scope" value="Bacteria"/>
</dbReference>
<dbReference type="HOGENOM" id="CLU_029848_0_0_5"/>
<dbReference type="UniPathway" id="UPA00075">
    <property type="reaction ID" value="UER00335"/>
</dbReference>
<dbReference type="Proteomes" id="UP000008330">
    <property type="component" value="Chromosome"/>
</dbReference>
<dbReference type="GO" id="GO:0005737">
    <property type="term" value="C:cytoplasm"/>
    <property type="evidence" value="ECO:0007669"/>
    <property type="project" value="UniProtKB-SubCell"/>
</dbReference>
<dbReference type="GO" id="GO:0004019">
    <property type="term" value="F:adenylosuccinate synthase activity"/>
    <property type="evidence" value="ECO:0007669"/>
    <property type="project" value="UniProtKB-UniRule"/>
</dbReference>
<dbReference type="GO" id="GO:0005525">
    <property type="term" value="F:GTP binding"/>
    <property type="evidence" value="ECO:0007669"/>
    <property type="project" value="UniProtKB-UniRule"/>
</dbReference>
<dbReference type="GO" id="GO:0000287">
    <property type="term" value="F:magnesium ion binding"/>
    <property type="evidence" value="ECO:0007669"/>
    <property type="project" value="UniProtKB-UniRule"/>
</dbReference>
<dbReference type="GO" id="GO:0044208">
    <property type="term" value="P:'de novo' AMP biosynthetic process"/>
    <property type="evidence" value="ECO:0007669"/>
    <property type="project" value="UniProtKB-UniRule"/>
</dbReference>
<dbReference type="GO" id="GO:0046040">
    <property type="term" value="P:IMP metabolic process"/>
    <property type="evidence" value="ECO:0007669"/>
    <property type="project" value="TreeGrafter"/>
</dbReference>
<dbReference type="CDD" id="cd03108">
    <property type="entry name" value="AdSS"/>
    <property type="match status" value="1"/>
</dbReference>
<dbReference type="FunFam" id="1.10.300.10:FF:000001">
    <property type="entry name" value="Adenylosuccinate synthetase"/>
    <property type="match status" value="1"/>
</dbReference>
<dbReference type="FunFam" id="3.90.170.10:FF:000001">
    <property type="entry name" value="Adenylosuccinate synthetase"/>
    <property type="match status" value="1"/>
</dbReference>
<dbReference type="Gene3D" id="3.40.440.10">
    <property type="entry name" value="Adenylosuccinate Synthetase, subunit A, domain 1"/>
    <property type="match status" value="1"/>
</dbReference>
<dbReference type="Gene3D" id="1.10.300.10">
    <property type="entry name" value="Adenylosuccinate Synthetase, subunit A, domain 2"/>
    <property type="match status" value="1"/>
</dbReference>
<dbReference type="Gene3D" id="3.90.170.10">
    <property type="entry name" value="Adenylosuccinate Synthetase, subunit A, domain 3"/>
    <property type="match status" value="1"/>
</dbReference>
<dbReference type="HAMAP" id="MF_00011">
    <property type="entry name" value="Adenylosucc_synth"/>
    <property type="match status" value="1"/>
</dbReference>
<dbReference type="InterPro" id="IPR018220">
    <property type="entry name" value="Adenylosuccin_syn_GTP-bd"/>
</dbReference>
<dbReference type="InterPro" id="IPR033128">
    <property type="entry name" value="Adenylosuccin_syn_Lys_AS"/>
</dbReference>
<dbReference type="InterPro" id="IPR042109">
    <property type="entry name" value="Adenylosuccinate_synth_dom1"/>
</dbReference>
<dbReference type="InterPro" id="IPR042110">
    <property type="entry name" value="Adenylosuccinate_synth_dom2"/>
</dbReference>
<dbReference type="InterPro" id="IPR042111">
    <property type="entry name" value="Adenylosuccinate_synth_dom3"/>
</dbReference>
<dbReference type="InterPro" id="IPR001114">
    <property type="entry name" value="Adenylosuccinate_synthetase"/>
</dbReference>
<dbReference type="InterPro" id="IPR027417">
    <property type="entry name" value="P-loop_NTPase"/>
</dbReference>
<dbReference type="NCBIfam" id="NF002223">
    <property type="entry name" value="PRK01117.1"/>
    <property type="match status" value="1"/>
</dbReference>
<dbReference type="NCBIfam" id="TIGR00184">
    <property type="entry name" value="purA"/>
    <property type="match status" value="1"/>
</dbReference>
<dbReference type="PANTHER" id="PTHR11846">
    <property type="entry name" value="ADENYLOSUCCINATE SYNTHETASE"/>
    <property type="match status" value="1"/>
</dbReference>
<dbReference type="PANTHER" id="PTHR11846:SF0">
    <property type="entry name" value="ADENYLOSUCCINATE SYNTHETASE"/>
    <property type="match status" value="1"/>
</dbReference>
<dbReference type="Pfam" id="PF00709">
    <property type="entry name" value="Adenylsucc_synt"/>
    <property type="match status" value="1"/>
</dbReference>
<dbReference type="SMART" id="SM00788">
    <property type="entry name" value="Adenylsucc_synt"/>
    <property type="match status" value="1"/>
</dbReference>
<dbReference type="SUPFAM" id="SSF52540">
    <property type="entry name" value="P-loop containing nucleoside triphosphate hydrolases"/>
    <property type="match status" value="1"/>
</dbReference>
<dbReference type="PROSITE" id="PS01266">
    <property type="entry name" value="ADENYLOSUCCIN_SYN_1"/>
    <property type="match status" value="1"/>
</dbReference>
<dbReference type="PROSITE" id="PS00513">
    <property type="entry name" value="ADENYLOSUCCIN_SYN_2"/>
    <property type="match status" value="1"/>
</dbReference>
<proteinExistence type="inferred from homology"/>
<reference key="1">
    <citation type="journal article" date="2010" name="Stand. Genomic Sci.">
        <title>Complete genome sequence of Rhizobium leguminosarum bv trifolii strain WSM2304, an effective microsymbiont of the South American clover Trifolium polymorphum.</title>
        <authorList>
            <person name="Reeve W."/>
            <person name="O'Hara G."/>
            <person name="Chain P."/>
            <person name="Ardley J."/>
            <person name="Brau L."/>
            <person name="Nandesena K."/>
            <person name="Tiwari R."/>
            <person name="Malfatti S."/>
            <person name="Kiss H."/>
            <person name="Lapidus A."/>
            <person name="Copeland A."/>
            <person name="Nolan M."/>
            <person name="Land M."/>
            <person name="Ivanova N."/>
            <person name="Mavromatis K."/>
            <person name="Markowitz V."/>
            <person name="Kyrpides N."/>
            <person name="Melino V."/>
            <person name="Denton M."/>
            <person name="Yates R."/>
            <person name="Howieson J."/>
        </authorList>
    </citation>
    <scope>NUCLEOTIDE SEQUENCE [LARGE SCALE GENOMIC DNA]</scope>
    <source>
        <strain>WSM2304</strain>
    </source>
</reference>
<organism>
    <name type="scientific">Rhizobium leguminosarum bv. trifolii (strain WSM2304)</name>
    <dbReference type="NCBI Taxonomy" id="395492"/>
    <lineage>
        <taxon>Bacteria</taxon>
        <taxon>Pseudomonadati</taxon>
        <taxon>Pseudomonadota</taxon>
        <taxon>Alphaproteobacteria</taxon>
        <taxon>Hyphomicrobiales</taxon>
        <taxon>Rhizobiaceae</taxon>
        <taxon>Rhizobium/Agrobacterium group</taxon>
        <taxon>Rhizobium</taxon>
    </lineage>
</organism>
<comment type="function">
    <text evidence="1">Plays an important role in the de novo pathway of purine nucleotide biosynthesis. Catalyzes the first committed step in the biosynthesis of AMP from IMP.</text>
</comment>
<comment type="catalytic activity">
    <reaction evidence="1">
        <text>IMP + L-aspartate + GTP = N(6)-(1,2-dicarboxyethyl)-AMP + GDP + phosphate + 2 H(+)</text>
        <dbReference type="Rhea" id="RHEA:15753"/>
        <dbReference type="ChEBI" id="CHEBI:15378"/>
        <dbReference type="ChEBI" id="CHEBI:29991"/>
        <dbReference type="ChEBI" id="CHEBI:37565"/>
        <dbReference type="ChEBI" id="CHEBI:43474"/>
        <dbReference type="ChEBI" id="CHEBI:57567"/>
        <dbReference type="ChEBI" id="CHEBI:58053"/>
        <dbReference type="ChEBI" id="CHEBI:58189"/>
        <dbReference type="EC" id="6.3.4.4"/>
    </reaction>
</comment>
<comment type="cofactor">
    <cofactor evidence="1">
        <name>Mg(2+)</name>
        <dbReference type="ChEBI" id="CHEBI:18420"/>
    </cofactor>
    <text evidence="1">Binds 1 Mg(2+) ion per subunit.</text>
</comment>
<comment type="pathway">
    <text evidence="1">Purine metabolism; AMP biosynthesis via de novo pathway; AMP from IMP: step 1/2.</text>
</comment>
<comment type="subunit">
    <text evidence="1">Homodimer.</text>
</comment>
<comment type="subcellular location">
    <subcellularLocation>
        <location evidence="1">Cytoplasm</location>
    </subcellularLocation>
</comment>
<comment type="similarity">
    <text evidence="1">Belongs to the adenylosuccinate synthetase family.</text>
</comment>
<feature type="chain" id="PRO_1000089329" description="Adenylosuccinate synthetase">
    <location>
        <begin position="1"/>
        <end position="432"/>
    </location>
</feature>
<feature type="active site" description="Proton acceptor" evidence="1">
    <location>
        <position position="13"/>
    </location>
</feature>
<feature type="active site" description="Proton donor" evidence="1">
    <location>
        <position position="41"/>
    </location>
</feature>
<feature type="binding site" evidence="1">
    <location>
        <begin position="12"/>
        <end position="18"/>
    </location>
    <ligand>
        <name>GTP</name>
        <dbReference type="ChEBI" id="CHEBI:37565"/>
    </ligand>
</feature>
<feature type="binding site" description="in other chain" evidence="1">
    <location>
        <begin position="13"/>
        <end position="16"/>
    </location>
    <ligand>
        <name>IMP</name>
        <dbReference type="ChEBI" id="CHEBI:58053"/>
        <note>ligand shared between dimeric partners</note>
    </ligand>
</feature>
<feature type="binding site" evidence="1">
    <location>
        <position position="13"/>
    </location>
    <ligand>
        <name>Mg(2+)</name>
        <dbReference type="ChEBI" id="CHEBI:18420"/>
    </ligand>
</feature>
<feature type="binding site" description="in other chain" evidence="1">
    <location>
        <begin position="38"/>
        <end position="41"/>
    </location>
    <ligand>
        <name>IMP</name>
        <dbReference type="ChEBI" id="CHEBI:58053"/>
        <note>ligand shared between dimeric partners</note>
    </ligand>
</feature>
<feature type="binding site" evidence="1">
    <location>
        <begin position="40"/>
        <end position="42"/>
    </location>
    <ligand>
        <name>GTP</name>
        <dbReference type="ChEBI" id="CHEBI:37565"/>
    </ligand>
</feature>
<feature type="binding site" evidence="1">
    <location>
        <position position="40"/>
    </location>
    <ligand>
        <name>Mg(2+)</name>
        <dbReference type="ChEBI" id="CHEBI:18420"/>
    </ligand>
</feature>
<feature type="binding site" description="in other chain" evidence="1">
    <location>
        <position position="132"/>
    </location>
    <ligand>
        <name>IMP</name>
        <dbReference type="ChEBI" id="CHEBI:58053"/>
        <note>ligand shared between dimeric partners</note>
    </ligand>
</feature>
<feature type="binding site" evidence="1">
    <location>
        <position position="146"/>
    </location>
    <ligand>
        <name>IMP</name>
        <dbReference type="ChEBI" id="CHEBI:58053"/>
        <note>ligand shared between dimeric partners</note>
    </ligand>
</feature>
<feature type="binding site" description="in other chain" evidence="1">
    <location>
        <position position="226"/>
    </location>
    <ligand>
        <name>IMP</name>
        <dbReference type="ChEBI" id="CHEBI:58053"/>
        <note>ligand shared between dimeric partners</note>
    </ligand>
</feature>
<feature type="binding site" description="in other chain" evidence="1">
    <location>
        <position position="241"/>
    </location>
    <ligand>
        <name>IMP</name>
        <dbReference type="ChEBI" id="CHEBI:58053"/>
        <note>ligand shared between dimeric partners</note>
    </ligand>
</feature>
<feature type="binding site" evidence="1">
    <location>
        <begin position="301"/>
        <end position="307"/>
    </location>
    <ligand>
        <name>substrate</name>
    </ligand>
</feature>
<feature type="binding site" description="in other chain" evidence="1">
    <location>
        <position position="305"/>
    </location>
    <ligand>
        <name>IMP</name>
        <dbReference type="ChEBI" id="CHEBI:58053"/>
        <note>ligand shared between dimeric partners</note>
    </ligand>
</feature>
<feature type="binding site" evidence="1">
    <location>
        <position position="307"/>
    </location>
    <ligand>
        <name>GTP</name>
        <dbReference type="ChEBI" id="CHEBI:37565"/>
    </ligand>
</feature>
<feature type="binding site" evidence="1">
    <location>
        <begin position="333"/>
        <end position="335"/>
    </location>
    <ligand>
        <name>GTP</name>
        <dbReference type="ChEBI" id="CHEBI:37565"/>
    </ligand>
</feature>
<feature type="binding site" evidence="1">
    <location>
        <begin position="415"/>
        <end position="417"/>
    </location>
    <ligand>
        <name>GTP</name>
        <dbReference type="ChEBI" id="CHEBI:37565"/>
    </ligand>
</feature>